<proteinExistence type="inferred from homology"/>
<gene>
    <name evidence="1" type="primary">atpH</name>
    <name type="ordered locus">Tmel_0293</name>
</gene>
<feature type="chain" id="PRO_0000382160" description="ATP synthase subunit delta">
    <location>
        <begin position="1"/>
        <end position="179"/>
    </location>
</feature>
<keyword id="KW-0066">ATP synthesis</keyword>
<keyword id="KW-0997">Cell inner membrane</keyword>
<keyword id="KW-1003">Cell membrane</keyword>
<keyword id="KW-0139">CF(1)</keyword>
<keyword id="KW-0375">Hydrogen ion transport</keyword>
<keyword id="KW-0406">Ion transport</keyword>
<keyword id="KW-0472">Membrane</keyword>
<keyword id="KW-0813">Transport</keyword>
<evidence type="ECO:0000255" key="1">
    <source>
        <dbReference type="HAMAP-Rule" id="MF_01416"/>
    </source>
</evidence>
<protein>
    <recommendedName>
        <fullName evidence="1">ATP synthase subunit delta</fullName>
    </recommendedName>
    <alternativeName>
        <fullName evidence="1">ATP synthase F(1) sector subunit delta</fullName>
    </alternativeName>
    <alternativeName>
        <fullName evidence="1">F-type ATPase subunit delta</fullName>
        <shortName evidence="1">F-ATPase subunit delta</shortName>
    </alternativeName>
</protein>
<sequence length="179" mass="20395">MRYSTISSKYVNALLMVGKKVNKIEDYGELLKALCDVYVQFKDFFDNPAVKVWKKVETIKESFGTSIDKVFVNFVSLVFENKRQKFIPQIAAYYRYASIDVENKILVNVTTAEKLSSEELRAISEFVKKCVNRVPVIEEKIDESLIAGAVIEFSGKMIDVSVSGRLNKIAREVFSLRKG</sequence>
<reference key="1">
    <citation type="submission" date="2007-05" db="EMBL/GenBank/DDBJ databases">
        <title>Complete sequence of Thermosipho melanesiensis BI429.</title>
        <authorList>
            <consortium name="US DOE Joint Genome Institute"/>
            <person name="Copeland A."/>
            <person name="Lucas S."/>
            <person name="Lapidus A."/>
            <person name="Barry K."/>
            <person name="Glavina del Rio T."/>
            <person name="Dalin E."/>
            <person name="Tice H."/>
            <person name="Pitluck S."/>
            <person name="Chertkov O."/>
            <person name="Brettin T."/>
            <person name="Bruce D."/>
            <person name="Detter J.C."/>
            <person name="Han C."/>
            <person name="Schmutz J."/>
            <person name="Larimer F."/>
            <person name="Land M."/>
            <person name="Hauser L."/>
            <person name="Kyrpides N."/>
            <person name="Mikhailova N."/>
            <person name="Nelson K."/>
            <person name="Gogarten J.P."/>
            <person name="Noll K."/>
            <person name="Richardson P."/>
        </authorList>
    </citation>
    <scope>NUCLEOTIDE SEQUENCE [LARGE SCALE GENOMIC DNA]</scope>
    <source>
        <strain>DSM 12029 / CIP 104789 / BI429</strain>
    </source>
</reference>
<dbReference type="EMBL" id="CP000716">
    <property type="protein sequence ID" value="ABR30165.1"/>
    <property type="molecule type" value="Genomic_DNA"/>
</dbReference>
<dbReference type="RefSeq" id="WP_012056526.1">
    <property type="nucleotide sequence ID" value="NC_009616.1"/>
</dbReference>
<dbReference type="SMR" id="A6LJR4"/>
<dbReference type="STRING" id="391009.Tmel_0293"/>
<dbReference type="KEGG" id="tme:Tmel_0293"/>
<dbReference type="eggNOG" id="COG0712">
    <property type="taxonomic scope" value="Bacteria"/>
</dbReference>
<dbReference type="HOGENOM" id="CLU_085114_4_0_0"/>
<dbReference type="OrthoDB" id="9802471at2"/>
<dbReference type="Proteomes" id="UP000001110">
    <property type="component" value="Chromosome"/>
</dbReference>
<dbReference type="GO" id="GO:0005886">
    <property type="term" value="C:plasma membrane"/>
    <property type="evidence" value="ECO:0007669"/>
    <property type="project" value="UniProtKB-SubCell"/>
</dbReference>
<dbReference type="GO" id="GO:0045259">
    <property type="term" value="C:proton-transporting ATP synthase complex"/>
    <property type="evidence" value="ECO:0007669"/>
    <property type="project" value="UniProtKB-KW"/>
</dbReference>
<dbReference type="GO" id="GO:0046933">
    <property type="term" value="F:proton-transporting ATP synthase activity, rotational mechanism"/>
    <property type="evidence" value="ECO:0007669"/>
    <property type="project" value="UniProtKB-UniRule"/>
</dbReference>
<dbReference type="Gene3D" id="1.10.520.20">
    <property type="entry name" value="N-terminal domain of the delta subunit of the F1F0-ATP synthase"/>
    <property type="match status" value="1"/>
</dbReference>
<dbReference type="HAMAP" id="MF_01416">
    <property type="entry name" value="ATP_synth_delta_bact"/>
    <property type="match status" value="1"/>
</dbReference>
<dbReference type="InterPro" id="IPR026015">
    <property type="entry name" value="ATP_synth_OSCP/delta_N_sf"/>
</dbReference>
<dbReference type="InterPro" id="IPR000711">
    <property type="entry name" value="ATPase_OSCP/dsu"/>
</dbReference>
<dbReference type="NCBIfam" id="TIGR01145">
    <property type="entry name" value="ATP_synt_delta"/>
    <property type="match status" value="1"/>
</dbReference>
<dbReference type="NCBIfam" id="NF009976">
    <property type="entry name" value="PRK13441.1"/>
    <property type="match status" value="1"/>
</dbReference>
<dbReference type="PANTHER" id="PTHR11910">
    <property type="entry name" value="ATP SYNTHASE DELTA CHAIN"/>
    <property type="match status" value="1"/>
</dbReference>
<dbReference type="Pfam" id="PF00213">
    <property type="entry name" value="OSCP"/>
    <property type="match status" value="1"/>
</dbReference>
<dbReference type="PRINTS" id="PR00125">
    <property type="entry name" value="ATPASEDELTA"/>
</dbReference>
<dbReference type="SUPFAM" id="SSF47928">
    <property type="entry name" value="N-terminal domain of the delta subunit of the F1F0-ATP synthase"/>
    <property type="match status" value="1"/>
</dbReference>
<comment type="function">
    <text evidence="1">F(1)F(0) ATP synthase produces ATP from ADP in the presence of a proton or sodium gradient. F-type ATPases consist of two structural domains, F(1) containing the extramembraneous catalytic core and F(0) containing the membrane proton channel, linked together by a central stalk and a peripheral stalk. During catalysis, ATP synthesis in the catalytic domain of F(1) is coupled via a rotary mechanism of the central stalk subunits to proton translocation.</text>
</comment>
<comment type="function">
    <text evidence="1">This protein is part of the stalk that links CF(0) to CF(1). It either transmits conformational changes from CF(0) to CF(1) or is implicated in proton conduction.</text>
</comment>
<comment type="subunit">
    <text evidence="1">F-type ATPases have 2 components, F(1) - the catalytic core - and F(0) - the membrane proton channel. F(1) has five subunits: alpha(3), beta(3), gamma(1), delta(1), epsilon(1). F(0) has three main subunits: a(1), b(2) and c(10-14). The alpha and beta chains form an alternating ring which encloses part of the gamma chain. F(1) is attached to F(0) by a central stalk formed by the gamma and epsilon chains, while a peripheral stalk is formed by the delta and b chains.</text>
</comment>
<comment type="subcellular location">
    <subcellularLocation>
        <location evidence="1">Cell inner membrane</location>
        <topology evidence="1">Peripheral membrane protein</topology>
    </subcellularLocation>
</comment>
<comment type="similarity">
    <text evidence="1">Belongs to the ATPase delta chain family.</text>
</comment>
<organism>
    <name type="scientific">Thermosipho melanesiensis (strain DSM 12029 / CIP 104789 / BI429)</name>
    <dbReference type="NCBI Taxonomy" id="391009"/>
    <lineage>
        <taxon>Bacteria</taxon>
        <taxon>Thermotogati</taxon>
        <taxon>Thermotogota</taxon>
        <taxon>Thermotogae</taxon>
        <taxon>Thermotogales</taxon>
        <taxon>Fervidobacteriaceae</taxon>
        <taxon>Thermosipho</taxon>
    </lineage>
</organism>
<name>ATPD_THEM4</name>
<accession>A6LJR4</accession>